<evidence type="ECO:0000250" key="1">
    <source>
        <dbReference type="UniProtKB" id="O95239"/>
    </source>
</evidence>
<evidence type="ECO:0000255" key="2"/>
<evidence type="ECO:0000255" key="3">
    <source>
        <dbReference type="PROSITE-ProRule" id="PRU00283"/>
    </source>
</evidence>
<evidence type="ECO:0000256" key="4">
    <source>
        <dbReference type="SAM" id="MobiDB-lite"/>
    </source>
</evidence>
<evidence type="ECO:0000269" key="5">
    <source>
    </source>
</evidence>
<evidence type="ECO:0000305" key="6"/>
<evidence type="ECO:0000305" key="7">
    <source>
    </source>
</evidence>
<evidence type="ECO:0007744" key="8">
    <source>
    </source>
</evidence>
<evidence type="ECO:0007744" key="9">
    <source>
    </source>
</evidence>
<evidence type="ECO:0007829" key="10">
    <source>
        <dbReference type="PDB" id="3ZFC"/>
    </source>
</evidence>
<evidence type="ECO:0007829" key="11">
    <source>
        <dbReference type="PDB" id="3ZFD"/>
    </source>
</evidence>
<accession>P33174</accession>
<accession>Q80YP3</accession>
<name>KIF4_MOUSE</name>
<proteinExistence type="evidence at protein level"/>
<keyword id="KW-0002">3D-structure</keyword>
<keyword id="KW-0067">ATP-binding</keyword>
<keyword id="KW-0158">Chromosome</keyword>
<keyword id="KW-0175">Coiled coil</keyword>
<keyword id="KW-0963">Cytoplasm</keyword>
<keyword id="KW-0206">Cytoskeleton</keyword>
<keyword id="KW-0238">DNA-binding</keyword>
<keyword id="KW-0408">Iron</keyword>
<keyword id="KW-0411">Iron-sulfur</keyword>
<keyword id="KW-0479">Metal-binding</keyword>
<keyword id="KW-0493">Microtubule</keyword>
<keyword id="KW-0505">Motor protein</keyword>
<keyword id="KW-0547">Nucleotide-binding</keyword>
<keyword id="KW-0539">Nucleus</keyword>
<keyword id="KW-0597">Phosphoprotein</keyword>
<keyword id="KW-1185">Reference proteome</keyword>
<organism>
    <name type="scientific">Mus musculus</name>
    <name type="common">Mouse</name>
    <dbReference type="NCBI Taxonomy" id="10090"/>
    <lineage>
        <taxon>Eukaryota</taxon>
        <taxon>Metazoa</taxon>
        <taxon>Chordata</taxon>
        <taxon>Craniata</taxon>
        <taxon>Vertebrata</taxon>
        <taxon>Euteleostomi</taxon>
        <taxon>Mammalia</taxon>
        <taxon>Eutheria</taxon>
        <taxon>Euarchontoglires</taxon>
        <taxon>Glires</taxon>
        <taxon>Rodentia</taxon>
        <taxon>Myomorpha</taxon>
        <taxon>Muroidea</taxon>
        <taxon>Muridae</taxon>
        <taxon>Murinae</taxon>
        <taxon>Mus</taxon>
        <taxon>Mus</taxon>
    </lineage>
</organism>
<dbReference type="EMBL" id="D12646">
    <property type="protein sequence ID" value="BAA02167.1"/>
    <property type="molecule type" value="mRNA"/>
</dbReference>
<dbReference type="EMBL" id="BX005480">
    <property type="status" value="NOT_ANNOTATED_CDS"/>
    <property type="molecule type" value="Genomic_DNA"/>
</dbReference>
<dbReference type="EMBL" id="BX276129">
    <property type="status" value="NOT_ANNOTATED_CDS"/>
    <property type="molecule type" value="Genomic_DNA"/>
</dbReference>
<dbReference type="EMBL" id="CH466564">
    <property type="protein sequence ID" value="EDL14171.1"/>
    <property type="molecule type" value="Genomic_DNA"/>
</dbReference>
<dbReference type="EMBL" id="BC050946">
    <property type="protein sequence ID" value="AAH50946.1"/>
    <property type="molecule type" value="mRNA"/>
</dbReference>
<dbReference type="CCDS" id="CCDS30305.1"/>
<dbReference type="PIR" id="A54803">
    <property type="entry name" value="A54803"/>
</dbReference>
<dbReference type="RefSeq" id="NP_032472.2">
    <property type="nucleotide sequence ID" value="NM_008446.3"/>
</dbReference>
<dbReference type="PDB" id="3ZFC">
    <property type="method" value="X-ray"/>
    <property type="resolution" value="1.80 A"/>
    <property type="chains" value="A=1-344"/>
</dbReference>
<dbReference type="PDB" id="3ZFD">
    <property type="method" value="X-ray"/>
    <property type="resolution" value="1.71 A"/>
    <property type="chains" value="A=1-344"/>
</dbReference>
<dbReference type="PDBsum" id="3ZFC"/>
<dbReference type="PDBsum" id="3ZFD"/>
<dbReference type="SMR" id="P33174"/>
<dbReference type="BioGRID" id="200944">
    <property type="interactions" value="38"/>
</dbReference>
<dbReference type="FunCoup" id="P33174">
    <property type="interactions" value="381"/>
</dbReference>
<dbReference type="IntAct" id="P33174">
    <property type="interactions" value="29"/>
</dbReference>
<dbReference type="STRING" id="10090.ENSMUSP00000048383"/>
<dbReference type="GlyGen" id="P33174">
    <property type="glycosylation" value="2 sites, 1 O-linked glycan (1 site)"/>
</dbReference>
<dbReference type="iPTMnet" id="P33174"/>
<dbReference type="PhosphoSitePlus" id="P33174"/>
<dbReference type="SwissPalm" id="P33174"/>
<dbReference type="jPOST" id="P33174"/>
<dbReference type="PaxDb" id="10090-ENSMUSP00000048383"/>
<dbReference type="PeptideAtlas" id="P33174"/>
<dbReference type="ProteomicsDB" id="263538"/>
<dbReference type="Pumba" id="P33174"/>
<dbReference type="Antibodypedia" id="27394">
    <property type="antibodies" value="228 antibodies from 33 providers"/>
</dbReference>
<dbReference type="DNASU" id="16571"/>
<dbReference type="Ensembl" id="ENSMUST00000048962.4">
    <property type="protein sequence ID" value="ENSMUSP00000048383.4"/>
    <property type="gene ID" value="ENSMUSG00000034311.4"/>
</dbReference>
<dbReference type="GeneID" id="16571"/>
<dbReference type="KEGG" id="mmu:16571"/>
<dbReference type="UCSC" id="uc009twh.2">
    <property type="organism name" value="mouse"/>
</dbReference>
<dbReference type="AGR" id="MGI:108389"/>
<dbReference type="CTD" id="16571"/>
<dbReference type="MGI" id="MGI:108389">
    <property type="gene designation" value="Kif4"/>
</dbReference>
<dbReference type="VEuPathDB" id="HostDB:ENSMUSG00000034311"/>
<dbReference type="eggNOG" id="KOG0244">
    <property type="taxonomic scope" value="Eukaryota"/>
</dbReference>
<dbReference type="GeneTree" id="ENSGT00940000158195"/>
<dbReference type="HOGENOM" id="CLU_001485_4_1_1"/>
<dbReference type="InParanoid" id="P33174"/>
<dbReference type="OMA" id="GDMGHTT"/>
<dbReference type="OrthoDB" id="3176171at2759"/>
<dbReference type="PhylomeDB" id="P33174"/>
<dbReference type="TreeFam" id="TF105224"/>
<dbReference type="BRENDA" id="5.6.1.3">
    <property type="organism ID" value="3474"/>
</dbReference>
<dbReference type="Reactome" id="R-MMU-2132295">
    <property type="pathway name" value="MHC class II antigen presentation"/>
</dbReference>
<dbReference type="Reactome" id="R-MMU-437239">
    <property type="pathway name" value="Recycling pathway of L1"/>
</dbReference>
<dbReference type="Reactome" id="R-MMU-6811434">
    <property type="pathway name" value="COPI-dependent Golgi-to-ER retrograde traffic"/>
</dbReference>
<dbReference type="Reactome" id="R-MMU-983189">
    <property type="pathway name" value="Kinesins"/>
</dbReference>
<dbReference type="BioGRID-ORCS" id="16571">
    <property type="hits" value="21 hits in 80 CRISPR screens"/>
</dbReference>
<dbReference type="ChiTaRS" id="Kif4">
    <property type="organism name" value="mouse"/>
</dbReference>
<dbReference type="EvolutionaryTrace" id="P33174"/>
<dbReference type="PRO" id="PR:P33174"/>
<dbReference type="Proteomes" id="UP000000589">
    <property type="component" value="Chromosome X"/>
</dbReference>
<dbReference type="RNAct" id="P33174">
    <property type="molecule type" value="protein"/>
</dbReference>
<dbReference type="Bgee" id="ENSMUSG00000034311">
    <property type="expression patterns" value="Expressed in animal zygote and 179 other cell types or tissues"/>
</dbReference>
<dbReference type="GO" id="GO:0005694">
    <property type="term" value="C:chromosome"/>
    <property type="evidence" value="ECO:0007669"/>
    <property type="project" value="UniProtKB-SubCell"/>
</dbReference>
<dbReference type="GO" id="GO:0005829">
    <property type="term" value="C:cytosol"/>
    <property type="evidence" value="ECO:0000304"/>
    <property type="project" value="Reactome"/>
</dbReference>
<dbReference type="GO" id="GO:0005874">
    <property type="term" value="C:microtubule"/>
    <property type="evidence" value="ECO:0007669"/>
    <property type="project" value="UniProtKB-KW"/>
</dbReference>
<dbReference type="GO" id="GO:0030496">
    <property type="term" value="C:midbody"/>
    <property type="evidence" value="ECO:0007669"/>
    <property type="project" value="Ensembl"/>
</dbReference>
<dbReference type="GO" id="GO:0005634">
    <property type="term" value="C:nucleus"/>
    <property type="evidence" value="ECO:0007669"/>
    <property type="project" value="UniProtKB-SubCell"/>
</dbReference>
<dbReference type="GO" id="GO:0005524">
    <property type="term" value="F:ATP binding"/>
    <property type="evidence" value="ECO:0007669"/>
    <property type="project" value="UniProtKB-KW"/>
</dbReference>
<dbReference type="GO" id="GO:0003677">
    <property type="term" value="F:DNA binding"/>
    <property type="evidence" value="ECO:0007669"/>
    <property type="project" value="UniProtKB-KW"/>
</dbReference>
<dbReference type="GO" id="GO:0051536">
    <property type="term" value="F:iron-sulfur cluster binding"/>
    <property type="evidence" value="ECO:0007669"/>
    <property type="project" value="UniProtKB-KW"/>
</dbReference>
<dbReference type="GO" id="GO:0046872">
    <property type="term" value="F:metal ion binding"/>
    <property type="evidence" value="ECO:0007669"/>
    <property type="project" value="UniProtKB-KW"/>
</dbReference>
<dbReference type="GO" id="GO:0008017">
    <property type="term" value="F:microtubule binding"/>
    <property type="evidence" value="ECO:0007669"/>
    <property type="project" value="InterPro"/>
</dbReference>
<dbReference type="GO" id="GO:0003777">
    <property type="term" value="F:microtubule motor activity"/>
    <property type="evidence" value="ECO:0007669"/>
    <property type="project" value="InterPro"/>
</dbReference>
<dbReference type="GO" id="GO:0007018">
    <property type="term" value="P:microtubule-based movement"/>
    <property type="evidence" value="ECO:0007669"/>
    <property type="project" value="InterPro"/>
</dbReference>
<dbReference type="GO" id="GO:0000281">
    <property type="term" value="P:mitotic cytokinesis"/>
    <property type="evidence" value="ECO:0000250"/>
    <property type="project" value="UniProtKB"/>
</dbReference>
<dbReference type="GO" id="GO:0051256">
    <property type="term" value="P:mitotic spindle midzone assembly"/>
    <property type="evidence" value="ECO:0000250"/>
    <property type="project" value="UniProtKB"/>
</dbReference>
<dbReference type="CDD" id="cd01372">
    <property type="entry name" value="KISc_KIF4"/>
    <property type="match status" value="1"/>
</dbReference>
<dbReference type="FunFam" id="3.40.850.10:FF:000038">
    <property type="entry name" value="chromosome-associated kinesin KIF4A"/>
    <property type="match status" value="1"/>
</dbReference>
<dbReference type="Gene3D" id="3.40.850.10">
    <property type="entry name" value="Kinesin motor domain"/>
    <property type="match status" value="1"/>
</dbReference>
<dbReference type="InterPro" id="IPR027640">
    <property type="entry name" value="Kinesin-like_fam"/>
</dbReference>
<dbReference type="InterPro" id="IPR019821">
    <property type="entry name" value="Kinesin_motor_CS"/>
</dbReference>
<dbReference type="InterPro" id="IPR001752">
    <property type="entry name" value="Kinesin_motor_dom"/>
</dbReference>
<dbReference type="InterPro" id="IPR036961">
    <property type="entry name" value="Kinesin_motor_dom_sf"/>
</dbReference>
<dbReference type="InterPro" id="IPR027417">
    <property type="entry name" value="P-loop_NTPase"/>
</dbReference>
<dbReference type="InterPro" id="IPR033467">
    <property type="entry name" value="Tesmin/TSO1-like_CXC"/>
</dbReference>
<dbReference type="PANTHER" id="PTHR47969">
    <property type="entry name" value="CHROMOSOME-ASSOCIATED KINESIN KIF4A-RELATED"/>
    <property type="match status" value="1"/>
</dbReference>
<dbReference type="PANTHER" id="PTHR47969:SF15">
    <property type="entry name" value="CHROMOSOME-ASSOCIATED KINESIN KIF4A-RELATED"/>
    <property type="match status" value="1"/>
</dbReference>
<dbReference type="Pfam" id="PF00225">
    <property type="entry name" value="Kinesin"/>
    <property type="match status" value="1"/>
</dbReference>
<dbReference type="PRINTS" id="PR00380">
    <property type="entry name" value="KINESINHEAVY"/>
</dbReference>
<dbReference type="SMART" id="SM01114">
    <property type="entry name" value="CXC"/>
    <property type="match status" value="1"/>
</dbReference>
<dbReference type="SMART" id="SM00129">
    <property type="entry name" value="KISc"/>
    <property type="match status" value="1"/>
</dbReference>
<dbReference type="SUPFAM" id="SSF52540">
    <property type="entry name" value="P-loop containing nucleoside triphosphate hydrolases"/>
    <property type="match status" value="1"/>
</dbReference>
<dbReference type="PROSITE" id="PS00411">
    <property type="entry name" value="KINESIN_MOTOR_1"/>
    <property type="match status" value="1"/>
</dbReference>
<dbReference type="PROSITE" id="PS50067">
    <property type="entry name" value="KINESIN_MOTOR_2"/>
    <property type="match status" value="1"/>
</dbReference>
<gene>
    <name type="primary">Kif4</name>
    <name type="synonym">Kif4a</name>
    <name type="synonym">Kns4</name>
</gene>
<comment type="function">
    <text evidence="1 5">Iron-sulfur (Fe-S) cluster binding motor protein that has a role in chromosome segregation during mitosis (By similarity). Required for mitotic chromosomal positioning and bipolar spindle stabilization.</text>
</comment>
<comment type="cofactor">
    <cofactor evidence="1">
        <name>[2Fe-2S] cluster</name>
        <dbReference type="ChEBI" id="CHEBI:190135"/>
    </cofactor>
    <cofactor evidence="1">
        <name>[4Fe-4S] cluster</name>
        <dbReference type="ChEBI" id="CHEBI:49883"/>
    </cofactor>
    <text evidence="1">Binds 1 [4Fe-4S] cluster (By similarity). In the presence of oxygen, the [4Fe-4S] cluster may be converted to [2Fe-2S] (By similarity).</text>
</comment>
<comment type="subcellular location">
    <subcellularLocation>
        <location evidence="5">Nucleus</location>
    </subcellularLocation>
    <subcellularLocation>
        <location evidence="5">Chromosome</location>
    </subcellularLocation>
    <subcellularLocation>
        <location evidence="7">Cytoplasm</location>
        <location evidence="7">Cytoskeleton</location>
    </subcellularLocation>
</comment>
<comment type="tissue specificity">
    <text evidence="5">Expressed in pyramidal cells in juvenile hippocampus, granular cells in juvenile cerebellar cortex and in adult spleen.</text>
</comment>
<comment type="similarity">
    <text evidence="3">Belongs to the TRAFAC class myosin-kinesin ATPase superfamily. Kinesin family. Chromokinesin subfamily.</text>
</comment>
<sequence>MKEEVKGIPVRVALRCRPLVSKEIKEGCQTCLSFVPGEPQVVVGNDKSFTYDFVFDPSTEQEEVFNTAVAPLIKGVFKGYNATVLAYGQTGSGKTYSMGGAYTAEQEHDSAIGVIPRVIQLLFKEINKKSDFEFTLKVSYLEIYNEEILDLLCSSREKATQINIREDPKEGIKIVGLTEKTVLVASDTVSCLEQGNNSRTVASTAMNSQSSRSHAIFTISIEQRKKNDKNSSFRSKLHLVDLAGSERQKKTKAEGDRLREGININRGLLCLGNVISALGDDKKGNFVPYRDSKLTRLLQDSLGGNSHTLMIACVSPADSNLEETLNTLRYADRARKIKNKPIINIDPQAAELNHLKQQVQQLQILLLQAHGGTLPGDINVEPSENLQSLMEKNQSLVEENEKLSRGLSEAAGQTAQMLERIILTEQANEKMNAKLEELRRHAACKVDLQKLVETLEDQELKENIEIICNLQQVIAQLSDEAAACMTATIDTAGEADTQVQSSPDTSRSSDVFSTQHALRQAQMSKELIELNKALALKEALAKKMTQNDNQLQPIQFQYQDNIKNLESEVLSLQREKEELVLELQTAKKDANQAKLSERRRKRLQELEGQIADLKKKLQEQSKLLKLKESTEHTVSKLNQEIRMMKNQRVQLMRQMKEDAEKFRQWKQQKDKEVIQLKERDRKRQYELLKLERNFQKQSNVLRRKTEEAAAANKRLKDALQKQKEVAEKRKETQSRGMESTAARMKNWLGNEIEVMVSTEEAKRHLNGLLEERKILAQDVAQLKEKRESGENPPLKLRRRTFSYDEIHGQDSGAEDSIAKQIESLETELELRSAQIADLQQKLLDAESEDRPKQRWESIATILEAKCAIKYLVGELVSSKILVSKLESSLNQSKASCIDVQKMLFEEQNHFAKIETELKEELVKVEQQHQEKVLYLLSQLQQSQMTEKQLEESVSEKEQQLLSTLKCQEEELRKMQEVCEQNQQLLQENSAIKQKLTLLQVASKQKPHLTRNIFQSPDSSFEYIPPKPKPCRIKEKCLEQSFAVEGLQYYSEPSVAEQDNEDSDDHADEEWIPTKLVKVSKKSIQGCSCKGWCGNKQCGCRKQKSDCNVSCSCDPTKCRNRHQNQDNSDAIELNQDSENSFKLEDPTEVTSGLSFFHPICATPSSKILKEMCDADQVQLKQPVFVSSSDHPELKSIASESQENKAIGKKKKRALASNTSFFSGCSPIQEESH</sequence>
<feature type="chain" id="PRO_0000125438" description="Chromosome-associated kinesin KIF4">
    <location>
        <begin position="1"/>
        <end position="1231"/>
    </location>
</feature>
<feature type="domain" description="Kinesin motor" evidence="3">
    <location>
        <begin position="9"/>
        <end position="337"/>
    </location>
</feature>
<feature type="region of interest" description="Globular">
    <location>
        <begin position="1001"/>
        <end position="1231"/>
    </location>
</feature>
<feature type="region of interest" description="Disordered" evidence="4">
    <location>
        <begin position="1189"/>
        <end position="1212"/>
    </location>
</feature>
<feature type="coiled-coil region" evidence="2">
    <location>
        <begin position="351"/>
        <end position="1000"/>
    </location>
</feature>
<feature type="binding site" evidence="3">
    <location>
        <begin position="88"/>
        <end position="95"/>
    </location>
    <ligand>
        <name>ATP</name>
        <dbReference type="ChEBI" id="CHEBI:30616"/>
    </ligand>
</feature>
<feature type="modified residue" description="Phosphoserine" evidence="9">
    <location>
        <position position="395"/>
    </location>
</feature>
<feature type="modified residue" description="Phosphothreonine" evidence="9">
    <location>
        <position position="800"/>
    </location>
</feature>
<feature type="modified residue" description="Phosphoserine" evidence="8">
    <location>
        <position position="802"/>
    </location>
</feature>
<feature type="modified residue" description="Phosphoserine" evidence="9">
    <location>
        <position position="811"/>
    </location>
</feature>
<feature type="modified residue" description="Phosphoserine" evidence="9">
    <location>
        <position position="816"/>
    </location>
</feature>
<feature type="modified residue" description="Phosphoserine" evidence="9">
    <location>
        <position position="1224"/>
    </location>
</feature>
<feature type="modified residue" description="Phosphoserine" evidence="9">
    <location>
        <position position="1230"/>
    </location>
</feature>
<feature type="sequence conflict" description="In Ref. 2." evidence="6" ref="2">
    <original>I</original>
    <variation>S</variation>
    <location>
        <position position="112"/>
    </location>
</feature>
<feature type="sequence conflict" description="In Ref. 1; BAA02167." evidence="6" ref="1">
    <original>EG</original>
    <variation>GE</variation>
    <location>
        <begin position="1044"/>
        <end position="1045"/>
    </location>
</feature>
<feature type="sequence conflict" description="In Ref. 1; BAA02167." evidence="6" ref="1">
    <original>V</original>
    <variation>M</variation>
    <location>
        <position position="1182"/>
    </location>
</feature>
<feature type="strand" evidence="11">
    <location>
        <begin position="7"/>
        <end position="9"/>
    </location>
</feature>
<feature type="strand" evidence="11">
    <location>
        <begin position="11"/>
        <end position="16"/>
    </location>
</feature>
<feature type="helix" evidence="11">
    <location>
        <begin position="21"/>
        <end position="25"/>
    </location>
</feature>
<feature type="strand" evidence="11">
    <location>
        <begin position="32"/>
        <end position="34"/>
    </location>
</feature>
<feature type="strand" evidence="11">
    <location>
        <begin position="38"/>
        <end position="43"/>
    </location>
</feature>
<feature type="turn" evidence="11">
    <location>
        <begin position="44"/>
        <end position="46"/>
    </location>
</feature>
<feature type="strand" evidence="11">
    <location>
        <begin position="47"/>
        <end position="50"/>
    </location>
</feature>
<feature type="strand" evidence="11">
    <location>
        <begin position="52"/>
        <end position="55"/>
    </location>
</feature>
<feature type="helix" evidence="11">
    <location>
        <begin position="61"/>
        <end position="68"/>
    </location>
</feature>
<feature type="helix" evidence="11">
    <location>
        <begin position="70"/>
        <end position="76"/>
    </location>
</feature>
<feature type="turn" evidence="11">
    <location>
        <begin position="77"/>
        <end position="79"/>
    </location>
</feature>
<feature type="strand" evidence="11">
    <location>
        <begin position="82"/>
        <end position="87"/>
    </location>
</feature>
<feature type="helix" evidence="11">
    <location>
        <begin position="94"/>
        <end position="98"/>
    </location>
</feature>
<feature type="turn" evidence="11">
    <location>
        <begin position="99"/>
        <end position="101"/>
    </location>
</feature>
<feature type="helix" evidence="11">
    <location>
        <begin position="104"/>
        <end position="106"/>
    </location>
</feature>
<feature type="helix" evidence="11">
    <location>
        <begin position="114"/>
        <end position="128"/>
    </location>
</feature>
<feature type="strand" evidence="11">
    <location>
        <begin position="132"/>
        <end position="144"/>
    </location>
</feature>
<feature type="strand" evidence="11">
    <location>
        <begin position="147"/>
        <end position="150"/>
    </location>
</feature>
<feature type="strand" evidence="11">
    <location>
        <begin position="163"/>
        <end position="166"/>
    </location>
</feature>
<feature type="turn" evidence="10">
    <location>
        <begin position="168"/>
        <end position="170"/>
    </location>
</feature>
<feature type="strand" evidence="11">
    <location>
        <begin position="172"/>
        <end position="175"/>
    </location>
</feature>
<feature type="strand" evidence="11">
    <location>
        <begin position="180"/>
        <end position="182"/>
    </location>
</feature>
<feature type="helix" evidence="11">
    <location>
        <begin position="185"/>
        <end position="198"/>
    </location>
</feature>
<feature type="strand" evidence="11">
    <location>
        <begin position="201"/>
        <end position="204"/>
    </location>
</feature>
<feature type="strand" evidence="11">
    <location>
        <begin position="207"/>
        <end position="211"/>
    </location>
</feature>
<feature type="strand" evidence="11">
    <location>
        <begin position="213"/>
        <end position="225"/>
    </location>
</feature>
<feature type="strand" evidence="11">
    <location>
        <begin position="228"/>
        <end position="241"/>
    </location>
</feature>
<feature type="helix" evidence="11">
    <location>
        <begin position="248"/>
        <end position="251"/>
    </location>
</feature>
<feature type="helix" evidence="11">
    <location>
        <begin position="255"/>
        <end position="279"/>
    </location>
</feature>
<feature type="helix" evidence="11">
    <location>
        <begin position="289"/>
        <end position="291"/>
    </location>
</feature>
<feature type="helix" evidence="11">
    <location>
        <begin position="293"/>
        <end position="297"/>
    </location>
</feature>
<feature type="turn" evidence="11">
    <location>
        <begin position="298"/>
        <end position="303"/>
    </location>
</feature>
<feature type="strand" evidence="11">
    <location>
        <begin position="304"/>
        <end position="314"/>
    </location>
</feature>
<feature type="helix" evidence="11">
    <location>
        <begin position="318"/>
        <end position="320"/>
    </location>
</feature>
<feature type="helix" evidence="11">
    <location>
        <begin position="321"/>
        <end position="334"/>
    </location>
</feature>
<protein>
    <recommendedName>
        <fullName>Chromosome-associated kinesin KIF4</fullName>
    </recommendedName>
    <alternativeName>
        <fullName>Chromokinesin</fullName>
    </alternativeName>
</protein>
<reference key="1">
    <citation type="journal article" date="1994" name="J. Cell Biol.">
        <title>A novel microtubule-based motor protein (KIF4) for organelle transports, whose expression is regulated developmentally.</title>
        <authorList>
            <person name="Sekine Y."/>
            <person name="Okada Y."/>
            <person name="Noda Y."/>
            <person name="Kondo S."/>
            <person name="Aizawa H."/>
            <person name="Takemura R."/>
            <person name="Hirokawa N."/>
        </authorList>
    </citation>
    <scope>NUCLEOTIDE SEQUENCE [MRNA]</scope>
    <scope>FUNCTION</scope>
    <scope>SUBCELLULAR LOCATION</scope>
    <scope>TISSUE SPECIFICITY</scope>
    <source>
        <strain>ICR</strain>
        <tissue>Brain</tissue>
    </source>
</reference>
<reference key="2">
    <citation type="journal article" date="2009" name="PLoS Biol.">
        <title>Lineage-specific biology revealed by a finished genome assembly of the mouse.</title>
        <authorList>
            <person name="Church D.M."/>
            <person name="Goodstadt L."/>
            <person name="Hillier L.W."/>
            <person name="Zody M.C."/>
            <person name="Goldstein S."/>
            <person name="She X."/>
            <person name="Bult C.J."/>
            <person name="Agarwala R."/>
            <person name="Cherry J.L."/>
            <person name="DiCuccio M."/>
            <person name="Hlavina W."/>
            <person name="Kapustin Y."/>
            <person name="Meric P."/>
            <person name="Maglott D."/>
            <person name="Birtle Z."/>
            <person name="Marques A.C."/>
            <person name="Graves T."/>
            <person name="Zhou S."/>
            <person name="Teague B."/>
            <person name="Potamousis K."/>
            <person name="Churas C."/>
            <person name="Place M."/>
            <person name="Herschleb J."/>
            <person name="Runnheim R."/>
            <person name="Forrest D."/>
            <person name="Amos-Landgraf J."/>
            <person name="Schwartz D.C."/>
            <person name="Cheng Z."/>
            <person name="Lindblad-Toh K."/>
            <person name="Eichler E.E."/>
            <person name="Ponting C.P."/>
        </authorList>
    </citation>
    <scope>NUCLEOTIDE SEQUENCE [LARGE SCALE GENOMIC DNA]</scope>
    <source>
        <strain>C57BL/6J</strain>
    </source>
</reference>
<reference key="3">
    <citation type="submission" date="2005-09" db="EMBL/GenBank/DDBJ databases">
        <authorList>
            <person name="Mural R.J."/>
            <person name="Adams M.D."/>
            <person name="Myers E.W."/>
            <person name="Smith H.O."/>
            <person name="Venter J.C."/>
        </authorList>
    </citation>
    <scope>NUCLEOTIDE SEQUENCE [LARGE SCALE GENOMIC DNA]</scope>
</reference>
<reference key="4">
    <citation type="journal article" date="2004" name="Genome Res.">
        <title>The status, quality, and expansion of the NIH full-length cDNA project: the Mammalian Gene Collection (MGC).</title>
        <authorList>
            <consortium name="The MGC Project Team"/>
        </authorList>
    </citation>
    <scope>NUCLEOTIDE SEQUENCE [LARGE SCALE MRNA]</scope>
    <source>
        <strain>C57BL/6J</strain>
        <tissue>Brain</tissue>
    </source>
</reference>
<reference key="5">
    <citation type="journal article" date="1992" name="J. Cell Biol.">
        <title>Kinesin family in murine central nervous system.</title>
        <authorList>
            <person name="Aizawa H."/>
            <person name="Sekine Y."/>
            <person name="Takemura R."/>
            <person name="Zhang Z."/>
            <person name="Nangaku M."/>
            <person name="Hirokawa N."/>
        </authorList>
    </citation>
    <scope>NUCLEOTIDE SEQUENCE [MRNA] OF 91-240</scope>
    <source>
        <tissue>Brain</tissue>
    </source>
</reference>
<reference key="6">
    <citation type="journal article" date="2007" name="Proc. Natl. Acad. Sci. U.S.A.">
        <title>Large-scale phosphorylation analysis of mouse liver.</title>
        <authorList>
            <person name="Villen J."/>
            <person name="Beausoleil S.A."/>
            <person name="Gerber S.A."/>
            <person name="Gygi S.P."/>
        </authorList>
    </citation>
    <scope>PHOSPHORYLATION [LARGE SCALE ANALYSIS] AT SER-802</scope>
    <scope>IDENTIFICATION BY MASS SPECTROMETRY [LARGE SCALE ANALYSIS]</scope>
    <source>
        <tissue>Liver</tissue>
    </source>
</reference>
<reference key="7">
    <citation type="journal article" date="2010" name="Cell">
        <title>A tissue-specific atlas of mouse protein phosphorylation and expression.</title>
        <authorList>
            <person name="Huttlin E.L."/>
            <person name="Jedrychowski M.P."/>
            <person name="Elias J.E."/>
            <person name="Goswami T."/>
            <person name="Rad R."/>
            <person name="Beausoleil S.A."/>
            <person name="Villen J."/>
            <person name="Haas W."/>
            <person name="Sowa M.E."/>
            <person name="Gygi S.P."/>
        </authorList>
    </citation>
    <scope>PHOSPHORYLATION [LARGE SCALE ANALYSIS] AT SER-395; THR-800; SER-811; SER-816; SER-1224 AND SER-1230</scope>
    <scope>IDENTIFICATION BY MASS SPECTROMETRY [LARGE SCALE ANALYSIS]</scope>
    <source>
        <tissue>Lung</tissue>
        <tissue>Spleen</tissue>
    </source>
</reference>